<protein>
    <recommendedName>
        <fullName>Activating signal cointegrator 1 complex subunit 3</fullName>
        <ecNumber evidence="1">5.6.2.4</ecNumber>
    </recommendedName>
</protein>
<proteinExistence type="inferred from homology"/>
<keyword id="KW-0067">ATP-binding</keyword>
<keyword id="KW-0175">Coiled coil</keyword>
<keyword id="KW-0963">Cytoplasm</keyword>
<keyword id="KW-0347">Helicase</keyword>
<keyword id="KW-0378">Hydrolase</keyword>
<keyword id="KW-0413">Isomerase</keyword>
<keyword id="KW-0547">Nucleotide-binding</keyword>
<keyword id="KW-0539">Nucleus</keyword>
<keyword id="KW-1185">Reference proteome</keyword>
<keyword id="KW-0677">Repeat</keyword>
<reference key="1">
    <citation type="journal article" date="2005" name="Nature">
        <title>The genome of the social amoeba Dictyostelium discoideum.</title>
        <authorList>
            <person name="Eichinger L."/>
            <person name="Pachebat J.A."/>
            <person name="Gloeckner G."/>
            <person name="Rajandream M.A."/>
            <person name="Sucgang R."/>
            <person name="Berriman M."/>
            <person name="Song J."/>
            <person name="Olsen R."/>
            <person name="Szafranski K."/>
            <person name="Xu Q."/>
            <person name="Tunggal B."/>
            <person name="Kummerfeld S."/>
            <person name="Madera M."/>
            <person name="Konfortov B.A."/>
            <person name="Rivero F."/>
            <person name="Bankier A.T."/>
            <person name="Lehmann R."/>
            <person name="Hamlin N."/>
            <person name="Davies R."/>
            <person name="Gaudet P."/>
            <person name="Fey P."/>
            <person name="Pilcher K."/>
            <person name="Chen G."/>
            <person name="Saunders D."/>
            <person name="Sodergren E.J."/>
            <person name="Davis P."/>
            <person name="Kerhornou A."/>
            <person name="Nie X."/>
            <person name="Hall N."/>
            <person name="Anjard C."/>
            <person name="Hemphill L."/>
            <person name="Bason N."/>
            <person name="Farbrother P."/>
            <person name="Desany B."/>
            <person name="Just E."/>
            <person name="Morio T."/>
            <person name="Rost R."/>
            <person name="Churcher C.M."/>
            <person name="Cooper J."/>
            <person name="Haydock S."/>
            <person name="van Driessche N."/>
            <person name="Cronin A."/>
            <person name="Goodhead I."/>
            <person name="Muzny D.M."/>
            <person name="Mourier T."/>
            <person name="Pain A."/>
            <person name="Lu M."/>
            <person name="Harper D."/>
            <person name="Lindsay R."/>
            <person name="Hauser H."/>
            <person name="James K.D."/>
            <person name="Quiles M."/>
            <person name="Madan Babu M."/>
            <person name="Saito T."/>
            <person name="Buchrieser C."/>
            <person name="Wardroper A."/>
            <person name="Felder M."/>
            <person name="Thangavelu M."/>
            <person name="Johnson D."/>
            <person name="Knights A."/>
            <person name="Loulseged H."/>
            <person name="Mungall K.L."/>
            <person name="Oliver K."/>
            <person name="Price C."/>
            <person name="Quail M.A."/>
            <person name="Urushihara H."/>
            <person name="Hernandez J."/>
            <person name="Rabbinowitsch E."/>
            <person name="Steffen D."/>
            <person name="Sanders M."/>
            <person name="Ma J."/>
            <person name="Kohara Y."/>
            <person name="Sharp S."/>
            <person name="Simmonds M.N."/>
            <person name="Spiegler S."/>
            <person name="Tivey A."/>
            <person name="Sugano S."/>
            <person name="White B."/>
            <person name="Walker D."/>
            <person name="Woodward J.R."/>
            <person name="Winckler T."/>
            <person name="Tanaka Y."/>
            <person name="Shaulsky G."/>
            <person name="Schleicher M."/>
            <person name="Weinstock G.M."/>
            <person name="Rosenthal A."/>
            <person name="Cox E.C."/>
            <person name="Chisholm R.L."/>
            <person name="Gibbs R.A."/>
            <person name="Loomis W.F."/>
            <person name="Platzer M."/>
            <person name="Kay R.R."/>
            <person name="Williams J.G."/>
            <person name="Dear P.H."/>
            <person name="Noegel A.A."/>
            <person name="Barrell B.G."/>
            <person name="Kuspa A."/>
        </authorList>
    </citation>
    <scope>NUCLEOTIDE SEQUENCE [LARGE SCALE GENOMIC DNA]</scope>
    <source>
        <strain>AX4</strain>
    </source>
</reference>
<comment type="function">
    <text evidence="1">ATPase involved both in DNA repair and rescue of stalled ribosomes.</text>
</comment>
<comment type="catalytic activity">
    <reaction evidence="1">
        <text>Couples ATP hydrolysis with the unwinding of duplex DNA by translocating in the 3'-5' direction.</text>
        <dbReference type="EC" id="5.6.2.4"/>
    </reaction>
</comment>
<comment type="catalytic activity">
    <reaction evidence="1">
        <text>ATP + H2O = ADP + phosphate + H(+)</text>
        <dbReference type="Rhea" id="RHEA:13065"/>
        <dbReference type="ChEBI" id="CHEBI:15377"/>
        <dbReference type="ChEBI" id="CHEBI:15378"/>
        <dbReference type="ChEBI" id="CHEBI:30616"/>
        <dbReference type="ChEBI" id="CHEBI:43474"/>
        <dbReference type="ChEBI" id="CHEBI:456216"/>
        <dbReference type="EC" id="5.6.2.4"/>
    </reaction>
</comment>
<comment type="subcellular location">
    <subcellularLocation>
        <location evidence="1">Nucleus</location>
    </subcellularLocation>
    <subcellularLocation>
        <location evidence="1">Cytoplasm</location>
        <location evidence="1">Cytosol</location>
    </subcellularLocation>
</comment>
<comment type="similarity">
    <text evidence="6">Belongs to the helicase family.</text>
</comment>
<sequence length="2195" mass="251613">MGIFDNQNKFEPTISNTLRSLTNGNTQTFDEQVVARNKEIMKKRNEKKKEKDRIIEKGQLTWSYFSDSKQNKEKEKENRQIFNKFKEIVLEMIGDDEIPSDEIASAVYETFMIVANPHKDKASKCESLRQIFHSFFKVAMYNKLSEQVGLLLQIKNPFESDSKASNESVQTIDSFESMEWQLPSKYQLQFEDNDEMSIFDEINHFINTKINNNLDEQKEKEKEKLINTPLSDMVLIHQPGQIKKSKKLKKLAAAGGSNNLESNNVVDSTYTIEWLREECSVISIGLGIPSEEIYNTIMSFLKNKKETIEEDMIGLLGFDHLELIADIIKYRDSILGSVVSGYRASNHSGPLNHFSIQTKDEKDFDKQLKKDDKKRYKNDQQQQQQQQYQEEQIKFIDHSQQSFEQPTIYNQKEFTGGDVCIDLPYGGKIALPKGTVRTEKTTHTEVMVPYSLAKPFADNEKLIEIGESIAEISRAAFGSIKKLNRIQSRVFESAYKSNENILISAPTGAGKTNIALLTILHEIESNINPYGYLDKDNFKIIYIAPLKALASEMVEKFSNSLKYLGIVSKELTGDMQLTQKELKETQIIVTTPEKWDVITRKSSDVALTKLVRLIIIDEIHLLHEERGPVLECIVARTLRQVETTQEMIRIVGLSATLPNYKDVARFIRAPASGTHFFDSSYRPVPLTQNFIGVKDNQGIMVMKNNMNQLCYERLEKSLKEGHQVMIFVHSRKDTVKSAEILSDMAKEKHFRFSNEEPSFGAKKEFEKVKSKEIRSLFQHGISVHHAGLLRSDRNVVEKYFANGTIKVLVCTATLAWGVNLPAHTVIIKGTQVYNAKNGGFMDLGISDVMQIFGRAGRPQFDTSGEGFLLTSKDKLDHYLSLMSSSMPIESKFITNLEDHLNAEIVLGTVSNVNEAVNWLSYTYLFIRMLQNPLVYGIPSSQRSKDPQLEEFKREIIIRAAKKLEQCKMTRFDEQSENLGMTELGRIASHYYIKHPSIETFNEMLNDQLGQDQVLNILSNSSEFENITLREEESTELDKLAENQCYYELTVLDSHSKVKCLLQAFFSRANIDGFSLVSDSNYTVQNSSRILRGLFEISLKKGWCTVSKTILDLCKMVDHQLWHFESPLRQAKVLSLDTIRKIEERDWTPERICDMEIGELSFVLGNQLIAKTTRKIAQQFPQLDFEIQVQPITANIIRINMTLIPMFSWNDKMHGDSQPFWIWVQDNESQYIFHSEYFMLTKKIYNQTEPITLTCIIPLPNPMPSQFFLHYISDRWLGSEGIREISFRHLVLPQQDRVVNTELLDLQPLPKEALKNKDFESLFKFSHFNPIQTQVFHTLYYTNNNVLLGSPTGSGKTICAELAMFKVFRDEPHMKVVYIAPLKALVRERMNDWKVKFQEKLGKKLVELTGDYTPNMIALQNADIVTTTPEKWDGISRNWKNRSYVTSVSLLIIDEIHLIGELRGPILEVIVSRMKLISKQTGVNIRVVGLSTAMANAIDLSEWMGIDRVGLFNFRPSCRPVPIEVHIQGFQGKNYCPRMQTMNKPSFAAIATYSPKKPVLIFVSSRRQTRLTALDLISYLVVDNDPLQWIQKGFDIEPTLARVKDQHLRHTLSFGIGMHHAGLNDGDRTIVESLFGENKIQILISTSTLAWGVNLPAHLVIIKGTEYFDGKTKRYVDFPLTDVLQMIGRAGRPQFDKEGKAMVMVHEPKKQFYKKFLYDPFPVESHLKDFLHDHLNAEIVSGTIQSKQGAINYLVNTFFFRRLVVSPSYYGLEDNSVEAVNQYLSDLLDSTLADLEQSSCIEINEYDEIIPMSMGKIASFYYLNYKTVQNFSDNIKRDSDIKTLLRVLSDAAEYSEFPVRHNEEILNQELNENLPIKIGNYEDSHTKVHLLLQAHFQRCPLPITDFTTDTKSALDQGIRILQAMIDVSFEYGYFATAIQVIRLLQMLVQGRWDYDSSLMTLPHINKDFADFLSSNLILSNGEQISNLSDMLKIPRDKIHLSLTNIGLSDSQIKETLNVIDHLPKVKIEYFINTNNNSNNNDDNNNENNNNNNKKNNNNNNNNNKSIVYSGQEFNIKIKVTRENKKFSNGHAFAPLYSKDKDEGWIMVLTDEKEQMIGFKRVPQMISNSVTANFKIPKAPFQSSTNYNVKLYSDTYMGLDYFHTFQVPIVNKKQIRNDDQDGDTIILLEAATGDMKK</sequence>
<name>ASCC3_DICDI</name>
<dbReference type="EC" id="5.6.2.4" evidence="1"/>
<dbReference type="EMBL" id="AAFI02000163">
    <property type="protein sequence ID" value="EAL62210.1"/>
    <property type="molecule type" value="Genomic_DNA"/>
</dbReference>
<dbReference type="RefSeq" id="XP_635715.1">
    <property type="nucleotide sequence ID" value="XM_630623.1"/>
</dbReference>
<dbReference type="SMR" id="Q54G57"/>
<dbReference type="FunCoup" id="Q54G57">
    <property type="interactions" value="457"/>
</dbReference>
<dbReference type="STRING" id="44689.Q54G57"/>
<dbReference type="PaxDb" id="44689-DDB0233132"/>
<dbReference type="EnsemblProtists" id="EAL62210">
    <property type="protein sequence ID" value="EAL62210"/>
    <property type="gene ID" value="DDB_G0290389"/>
</dbReference>
<dbReference type="GeneID" id="8627633"/>
<dbReference type="KEGG" id="ddi:DDB_G0290389"/>
<dbReference type="dictyBase" id="DDB_G0290389">
    <property type="gene designation" value="ascc3"/>
</dbReference>
<dbReference type="VEuPathDB" id="AmoebaDB:DDB_G0290389"/>
<dbReference type="eggNOG" id="KOG0952">
    <property type="taxonomic scope" value="Eukaryota"/>
</dbReference>
<dbReference type="HOGENOM" id="CLU_000335_2_1_1"/>
<dbReference type="InParanoid" id="Q54G57"/>
<dbReference type="OMA" id="MCSATEF"/>
<dbReference type="PhylomeDB" id="Q54G57"/>
<dbReference type="PRO" id="PR:Q54G57"/>
<dbReference type="Proteomes" id="UP000002195">
    <property type="component" value="Chromosome 5"/>
</dbReference>
<dbReference type="GO" id="GO:0005829">
    <property type="term" value="C:cytosol"/>
    <property type="evidence" value="ECO:0000250"/>
    <property type="project" value="UniProtKB"/>
</dbReference>
<dbReference type="GO" id="GO:0005634">
    <property type="term" value="C:nucleus"/>
    <property type="evidence" value="ECO:0000318"/>
    <property type="project" value="GO_Central"/>
</dbReference>
<dbReference type="GO" id="GO:0043138">
    <property type="term" value="F:3'-5' DNA helicase activity"/>
    <property type="evidence" value="ECO:0000318"/>
    <property type="project" value="GO_Central"/>
</dbReference>
<dbReference type="GO" id="GO:0005524">
    <property type="term" value="F:ATP binding"/>
    <property type="evidence" value="ECO:0007669"/>
    <property type="project" value="UniProtKB-KW"/>
</dbReference>
<dbReference type="GO" id="GO:0016887">
    <property type="term" value="F:ATP hydrolysis activity"/>
    <property type="evidence" value="ECO:0007669"/>
    <property type="project" value="InterPro"/>
</dbReference>
<dbReference type="GO" id="GO:0003676">
    <property type="term" value="F:nucleic acid binding"/>
    <property type="evidence" value="ECO:0007669"/>
    <property type="project" value="InterPro"/>
</dbReference>
<dbReference type="GO" id="GO:0072344">
    <property type="term" value="P:rescue of stalled ribosome"/>
    <property type="evidence" value="ECO:0000250"/>
    <property type="project" value="UniProtKB"/>
</dbReference>
<dbReference type="GO" id="GO:1990116">
    <property type="term" value="P:ribosome-associated ubiquitin-dependent protein catabolic process"/>
    <property type="evidence" value="ECO:0000250"/>
    <property type="project" value="UniProtKB"/>
</dbReference>
<dbReference type="CDD" id="cd18020">
    <property type="entry name" value="DEXHc_ASCC3_1"/>
    <property type="match status" value="1"/>
</dbReference>
<dbReference type="CDD" id="cd18022">
    <property type="entry name" value="DEXHc_ASCC3_2"/>
    <property type="match status" value="1"/>
</dbReference>
<dbReference type="CDD" id="cd18795">
    <property type="entry name" value="SF2_C_Ski2"/>
    <property type="match status" value="2"/>
</dbReference>
<dbReference type="FunFam" id="3.40.50.300:FF:000198">
    <property type="entry name" value="Activating signal cointegrator 1 complex subunit"/>
    <property type="match status" value="1"/>
</dbReference>
<dbReference type="FunFam" id="1.10.3380.10:FF:000002">
    <property type="entry name" value="Activating signal cointegrator 1 complex subunit 3"/>
    <property type="match status" value="1"/>
</dbReference>
<dbReference type="FunFam" id="2.60.40.150:FF:000579">
    <property type="entry name" value="Activating signal cointegrator 1 complex subunit 3"/>
    <property type="match status" value="1"/>
</dbReference>
<dbReference type="FunFam" id="3.40.50.300:FF:000231">
    <property type="entry name" value="Activating signal cointegrator 1 complex subunit 3"/>
    <property type="match status" value="1"/>
</dbReference>
<dbReference type="FunFam" id="2.60.40.150:FF:000004">
    <property type="entry name" value="RNA helicase, activating signal cointegrator 1"/>
    <property type="match status" value="1"/>
</dbReference>
<dbReference type="FunFam" id="3.40.50.300:FF:000102">
    <property type="entry name" value="RNA helicase, activating signal cointegrator 1"/>
    <property type="match status" value="1"/>
</dbReference>
<dbReference type="FunFam" id="1.10.10.10:FF:000012">
    <property type="entry name" value="U5 small nuclear ribonucleoprotein helicase"/>
    <property type="match status" value="1"/>
</dbReference>
<dbReference type="FunFam" id="1.10.10.10:FF:000024">
    <property type="entry name" value="U5 small nuclear ribonucleoprotein helicase"/>
    <property type="match status" value="1"/>
</dbReference>
<dbReference type="FunFam" id="1.10.3380.10:FF:000001">
    <property type="entry name" value="U5 small nuclear ribonucleoprotein helicase"/>
    <property type="match status" value="1"/>
</dbReference>
<dbReference type="FunFam" id="3.40.50.300:FF:000062">
    <property type="entry name" value="U5 small nuclear ribonucleoprotein helicase"/>
    <property type="match status" value="1"/>
</dbReference>
<dbReference type="Gene3D" id="2.60.40.150">
    <property type="entry name" value="C2 domain"/>
    <property type="match status" value="2"/>
</dbReference>
<dbReference type="Gene3D" id="3.40.50.300">
    <property type="entry name" value="P-loop containing nucleotide triphosphate hydrolases"/>
    <property type="match status" value="4"/>
</dbReference>
<dbReference type="Gene3D" id="1.10.3380.10">
    <property type="entry name" value="Sec63 N-terminal domain-like domain"/>
    <property type="match status" value="2"/>
</dbReference>
<dbReference type="Gene3D" id="1.10.10.10">
    <property type="entry name" value="Winged helix-like DNA-binding domain superfamily/Winged helix DNA-binding domain"/>
    <property type="match status" value="2"/>
</dbReference>
<dbReference type="InterPro" id="IPR003593">
    <property type="entry name" value="AAA+_ATPase"/>
</dbReference>
<dbReference type="InterPro" id="IPR035892">
    <property type="entry name" value="C2_domain_sf"/>
</dbReference>
<dbReference type="InterPro" id="IPR011545">
    <property type="entry name" value="DEAD/DEAH_box_helicase_dom"/>
</dbReference>
<dbReference type="InterPro" id="IPR050474">
    <property type="entry name" value="Hel308_SKI2-like"/>
</dbReference>
<dbReference type="InterPro" id="IPR014001">
    <property type="entry name" value="Helicase_ATP-bd"/>
</dbReference>
<dbReference type="InterPro" id="IPR001650">
    <property type="entry name" value="Helicase_C-like"/>
</dbReference>
<dbReference type="InterPro" id="IPR014756">
    <property type="entry name" value="Ig_E-set"/>
</dbReference>
<dbReference type="InterPro" id="IPR027417">
    <property type="entry name" value="P-loop_NTPase"/>
</dbReference>
<dbReference type="InterPro" id="IPR004179">
    <property type="entry name" value="Sec63-dom"/>
</dbReference>
<dbReference type="InterPro" id="IPR036388">
    <property type="entry name" value="WH-like_DNA-bd_sf"/>
</dbReference>
<dbReference type="InterPro" id="IPR036390">
    <property type="entry name" value="WH_DNA-bd_sf"/>
</dbReference>
<dbReference type="PANTHER" id="PTHR47961:SF13">
    <property type="entry name" value="ACTIVATING SIGNAL COINTEGRATOR 1 COMPLEX SUBUNIT 3"/>
    <property type="match status" value="1"/>
</dbReference>
<dbReference type="PANTHER" id="PTHR47961">
    <property type="entry name" value="DNA POLYMERASE THETA, PUTATIVE (AFU_ORTHOLOGUE AFUA_1G05260)-RELATED"/>
    <property type="match status" value="1"/>
</dbReference>
<dbReference type="Pfam" id="PF00270">
    <property type="entry name" value="DEAD"/>
    <property type="match status" value="2"/>
</dbReference>
<dbReference type="Pfam" id="PF00271">
    <property type="entry name" value="Helicase_C"/>
    <property type="match status" value="2"/>
</dbReference>
<dbReference type="Pfam" id="PF02889">
    <property type="entry name" value="Sec63"/>
    <property type="match status" value="2"/>
</dbReference>
<dbReference type="Pfam" id="PF23445">
    <property type="entry name" value="SNRNP200_wHTH"/>
    <property type="match status" value="2"/>
</dbReference>
<dbReference type="PIRSF" id="PIRSF039073">
    <property type="entry name" value="BRR2"/>
    <property type="match status" value="1"/>
</dbReference>
<dbReference type="SMART" id="SM00382">
    <property type="entry name" value="AAA"/>
    <property type="match status" value="2"/>
</dbReference>
<dbReference type="SMART" id="SM00487">
    <property type="entry name" value="DEXDc"/>
    <property type="match status" value="2"/>
</dbReference>
<dbReference type="SMART" id="SM00490">
    <property type="entry name" value="HELICc"/>
    <property type="match status" value="2"/>
</dbReference>
<dbReference type="SMART" id="SM00973">
    <property type="entry name" value="Sec63"/>
    <property type="match status" value="2"/>
</dbReference>
<dbReference type="SUPFAM" id="SSF81296">
    <property type="entry name" value="E set domains"/>
    <property type="match status" value="1"/>
</dbReference>
<dbReference type="SUPFAM" id="SSF52540">
    <property type="entry name" value="P-loop containing nucleoside triphosphate hydrolases"/>
    <property type="match status" value="3"/>
</dbReference>
<dbReference type="SUPFAM" id="SSF158702">
    <property type="entry name" value="Sec63 N-terminal domain-like"/>
    <property type="match status" value="2"/>
</dbReference>
<dbReference type="SUPFAM" id="SSF46785">
    <property type="entry name" value="Winged helix' DNA-binding domain"/>
    <property type="match status" value="2"/>
</dbReference>
<dbReference type="PROSITE" id="PS51192">
    <property type="entry name" value="HELICASE_ATP_BIND_1"/>
    <property type="match status" value="2"/>
</dbReference>
<dbReference type="PROSITE" id="PS51194">
    <property type="entry name" value="HELICASE_CTER"/>
    <property type="match status" value="2"/>
</dbReference>
<accession>Q54G57</accession>
<evidence type="ECO:0000250" key="1">
    <source>
        <dbReference type="UniProtKB" id="Q8N3C0"/>
    </source>
</evidence>
<evidence type="ECO:0000255" key="2"/>
<evidence type="ECO:0000255" key="3">
    <source>
        <dbReference type="PROSITE-ProRule" id="PRU00541"/>
    </source>
</evidence>
<evidence type="ECO:0000255" key="4">
    <source>
        <dbReference type="PROSITE-ProRule" id="PRU00542"/>
    </source>
</evidence>
<evidence type="ECO:0000256" key="5">
    <source>
        <dbReference type="SAM" id="MobiDB-lite"/>
    </source>
</evidence>
<evidence type="ECO:0000305" key="6"/>
<feature type="chain" id="PRO_0000371330" description="Activating signal cointegrator 1 complex subunit 3">
    <location>
        <begin position="1"/>
        <end position="2195"/>
    </location>
</feature>
<feature type="domain" description="Helicase ATP-binding 1" evidence="3">
    <location>
        <begin position="492"/>
        <end position="675"/>
    </location>
</feature>
<feature type="domain" description="Helicase C-terminal 1" evidence="4">
    <location>
        <begin position="705"/>
        <end position="920"/>
    </location>
</feature>
<feature type="domain" description="SEC63 1">
    <location>
        <begin position="980"/>
        <end position="1286"/>
    </location>
</feature>
<feature type="domain" description="Helicase ATP-binding 2" evidence="3">
    <location>
        <begin position="1336"/>
        <end position="1511"/>
    </location>
</feature>
<feature type="domain" description="Helicase C-terminal 2" evidence="4">
    <location>
        <begin position="1545"/>
        <end position="1750"/>
    </location>
</feature>
<feature type="domain" description="SEC63 2">
    <location>
        <begin position="1810"/>
        <end position="1969"/>
    </location>
</feature>
<feature type="region of interest" description="Disordered" evidence="5">
    <location>
        <begin position="367"/>
        <end position="387"/>
    </location>
</feature>
<feature type="region of interest" description="Disordered" evidence="5">
    <location>
        <begin position="2032"/>
        <end position="2064"/>
    </location>
</feature>
<feature type="coiled-coil region" evidence="2">
    <location>
        <begin position="31"/>
        <end position="88"/>
    </location>
</feature>
<feature type="short sequence motif" description="DEAH box">
    <location>
        <begin position="617"/>
        <end position="620"/>
    </location>
</feature>
<feature type="short sequence motif" description="DEAH box">
    <location>
        <begin position="1453"/>
        <end position="1456"/>
    </location>
</feature>
<feature type="compositionally biased region" description="Basic and acidic residues" evidence="5">
    <location>
        <begin position="367"/>
        <end position="378"/>
    </location>
</feature>
<feature type="compositionally biased region" description="Low complexity" evidence="5">
    <location>
        <begin position="2032"/>
        <end position="2062"/>
    </location>
</feature>
<feature type="binding site" evidence="3">
    <location>
        <begin position="505"/>
        <end position="512"/>
    </location>
    <ligand>
        <name>ATP</name>
        <dbReference type="ChEBI" id="CHEBI:30616"/>
    </ligand>
</feature>
<feature type="binding site" evidence="3">
    <location>
        <begin position="1349"/>
        <end position="1356"/>
    </location>
    <ligand>
        <name>ATP</name>
        <dbReference type="ChEBI" id="CHEBI:30616"/>
    </ligand>
</feature>
<gene>
    <name type="primary">ascc3</name>
    <name type="ORF">DDB_G0290389</name>
</gene>
<organism>
    <name type="scientific">Dictyostelium discoideum</name>
    <name type="common">Social amoeba</name>
    <dbReference type="NCBI Taxonomy" id="44689"/>
    <lineage>
        <taxon>Eukaryota</taxon>
        <taxon>Amoebozoa</taxon>
        <taxon>Evosea</taxon>
        <taxon>Eumycetozoa</taxon>
        <taxon>Dictyostelia</taxon>
        <taxon>Dictyosteliales</taxon>
        <taxon>Dictyosteliaceae</taxon>
        <taxon>Dictyostelium</taxon>
    </lineage>
</organism>